<evidence type="ECO:0000255" key="1">
    <source>
        <dbReference type="HAMAP-Rule" id="MF_01082"/>
    </source>
</evidence>
<feature type="chain" id="PRO_0000152547" description="Probable tRNA pseudouridine synthase D">
    <location>
        <begin position="1"/>
        <end position="374"/>
    </location>
</feature>
<feature type="domain" description="TRUD" evidence="1">
    <location>
        <begin position="141"/>
        <end position="340"/>
    </location>
</feature>
<feature type="active site" description="Nucleophile" evidence="1">
    <location>
        <position position="81"/>
    </location>
</feature>
<reference key="1">
    <citation type="journal article" date="2003" name="Proc. Natl. Acad. Sci. U.S.A.">
        <title>The genome of Nanoarchaeum equitans: insights into early archaeal evolution and derived parasitism.</title>
        <authorList>
            <person name="Waters E."/>
            <person name="Hohn M.J."/>
            <person name="Ahel I."/>
            <person name="Graham D.E."/>
            <person name="Adams M.D."/>
            <person name="Barnstead M."/>
            <person name="Beeson K.Y."/>
            <person name="Bibbs L."/>
            <person name="Bolanos R."/>
            <person name="Keller M."/>
            <person name="Kretz K."/>
            <person name="Lin X."/>
            <person name="Mathur E."/>
            <person name="Ni J."/>
            <person name="Podar M."/>
            <person name="Richardson T."/>
            <person name="Sutton G.G."/>
            <person name="Simon M."/>
            <person name="Soell D."/>
            <person name="Stetter K.O."/>
            <person name="Short J.M."/>
            <person name="Noorderwier M."/>
        </authorList>
    </citation>
    <scope>NUCLEOTIDE SEQUENCE [LARGE SCALE GENOMIC DNA]</scope>
    <source>
        <strain>Kin4-M</strain>
    </source>
</reference>
<accession>P60348</accession>
<protein>
    <recommendedName>
        <fullName evidence="1">Probable tRNA pseudouridine synthase D</fullName>
        <ecNumber evidence="1">5.4.99.27</ecNumber>
    </recommendedName>
    <alternativeName>
        <fullName evidence="1">tRNA pseudouridine(13) synthase</fullName>
    </alternativeName>
    <alternativeName>
        <fullName evidence="1">tRNA pseudouridylate synthase D</fullName>
    </alternativeName>
    <alternativeName>
        <fullName evidence="1">tRNA-uridine isomerase D</fullName>
    </alternativeName>
</protein>
<proteinExistence type="inferred from homology"/>
<keyword id="KW-0413">Isomerase</keyword>
<keyword id="KW-1185">Reference proteome</keyword>
<keyword id="KW-0819">tRNA processing</keyword>
<sequence length="374" mass="44185">MRIKEKPEDFVVIEKTNFSIAEPSKYYDQFKFMGIKDNGIPGDYTIYVLKKKNLSTTQAIKIIAKQFRLSKYRISFSGEKDKKAITYQLISIYKGPKKSMFLDNLELYYIGLSDKPVKLGSHLGNYFEIKVYAESPKGFDVFPNYFDVQRFGDKRLVNHLIGKHLIKNECEEAAKILLTFVGKESKKTIKVRQLIKEYWNNIEKLKKVIPLMPKALDIEKAYLQSFIEKKDYCKAFKAIPKWILMLFIHSYQSYIFNETLKMYLKNKTKIIKIRDLLEFYFADYYENIEIPLIGYKVNAKGEIKEIIDYLLDKEGITIEMLKNKKVVGTYRKGFQKMYDLKIKKNQKWLTKFYLEKGSYATVAIRSLFLEPIDF</sequence>
<comment type="function">
    <text evidence="1">Could be responsible for synthesis of pseudouridine from uracil-13 in transfer RNAs.</text>
</comment>
<comment type="catalytic activity">
    <reaction evidence="1">
        <text>uridine(13) in tRNA = pseudouridine(13) in tRNA</text>
        <dbReference type="Rhea" id="RHEA:42540"/>
        <dbReference type="Rhea" id="RHEA-COMP:10105"/>
        <dbReference type="Rhea" id="RHEA-COMP:10106"/>
        <dbReference type="ChEBI" id="CHEBI:65314"/>
        <dbReference type="ChEBI" id="CHEBI:65315"/>
        <dbReference type="EC" id="5.4.99.27"/>
    </reaction>
</comment>
<comment type="similarity">
    <text evidence="1">Belongs to the pseudouridine synthase TruD family.</text>
</comment>
<name>TRUD_NANEQ</name>
<organism>
    <name type="scientific">Nanoarchaeum equitans (strain Kin4-M)</name>
    <dbReference type="NCBI Taxonomy" id="228908"/>
    <lineage>
        <taxon>Archaea</taxon>
        <taxon>Nanobdellota</taxon>
        <taxon>Candidatus Nanoarchaeia</taxon>
        <taxon>Nanoarchaeales</taxon>
        <taxon>Nanoarchaeaceae</taxon>
        <taxon>Nanoarchaeum</taxon>
    </lineage>
</organism>
<gene>
    <name evidence="1" type="primary">truD</name>
    <name type="ordered locus">NEQ293</name>
</gene>
<dbReference type="EC" id="5.4.99.27" evidence="1"/>
<dbReference type="EMBL" id="AE017199">
    <property type="protein sequence ID" value="AAR39141.1"/>
    <property type="molecule type" value="Genomic_DNA"/>
</dbReference>
<dbReference type="SMR" id="P60348"/>
<dbReference type="STRING" id="228908.NEQ293"/>
<dbReference type="EnsemblBacteria" id="AAR39141">
    <property type="protein sequence ID" value="AAR39141"/>
    <property type="gene ID" value="NEQ293"/>
</dbReference>
<dbReference type="KEGG" id="neq:NEQ293"/>
<dbReference type="HOGENOM" id="CLU_005281_4_1_2"/>
<dbReference type="Proteomes" id="UP000000578">
    <property type="component" value="Chromosome"/>
</dbReference>
<dbReference type="GO" id="GO:0003723">
    <property type="term" value="F:RNA binding"/>
    <property type="evidence" value="ECO:0007669"/>
    <property type="project" value="InterPro"/>
</dbReference>
<dbReference type="GO" id="GO:0160150">
    <property type="term" value="F:tRNA pseudouridine(13) synthase activity"/>
    <property type="evidence" value="ECO:0007669"/>
    <property type="project" value="UniProtKB-EC"/>
</dbReference>
<dbReference type="GO" id="GO:0031119">
    <property type="term" value="P:tRNA pseudouridine synthesis"/>
    <property type="evidence" value="ECO:0007669"/>
    <property type="project" value="UniProtKB-UniRule"/>
</dbReference>
<dbReference type="Gene3D" id="3.30.2350.20">
    <property type="entry name" value="TruD, catalytic domain"/>
    <property type="match status" value="3"/>
</dbReference>
<dbReference type="HAMAP" id="MF_01082">
    <property type="entry name" value="TruD"/>
    <property type="match status" value="1"/>
</dbReference>
<dbReference type="InterPro" id="IPR020103">
    <property type="entry name" value="PsdUridine_synth_cat_dom_sf"/>
</dbReference>
<dbReference type="InterPro" id="IPR001656">
    <property type="entry name" value="PsdUridine_synth_TruD"/>
</dbReference>
<dbReference type="InterPro" id="IPR020119">
    <property type="entry name" value="PsdUridine_synth_TruD_CS"/>
</dbReference>
<dbReference type="InterPro" id="IPR011760">
    <property type="entry name" value="PsdUridine_synth_TruD_insert"/>
</dbReference>
<dbReference type="InterPro" id="IPR042214">
    <property type="entry name" value="TruD_catalytic"/>
</dbReference>
<dbReference type="NCBIfam" id="TIGR00094">
    <property type="entry name" value="tRNA_TruD_broad"/>
    <property type="match status" value="1"/>
</dbReference>
<dbReference type="PANTHER" id="PTHR13326:SF21">
    <property type="entry name" value="PSEUDOURIDYLATE SYNTHASE PUS7L"/>
    <property type="match status" value="1"/>
</dbReference>
<dbReference type="PANTHER" id="PTHR13326">
    <property type="entry name" value="TRNA PSEUDOURIDINE SYNTHASE D"/>
    <property type="match status" value="1"/>
</dbReference>
<dbReference type="Pfam" id="PF01142">
    <property type="entry name" value="TruD"/>
    <property type="match status" value="1"/>
</dbReference>
<dbReference type="SUPFAM" id="SSF55120">
    <property type="entry name" value="Pseudouridine synthase"/>
    <property type="match status" value="1"/>
</dbReference>
<dbReference type="PROSITE" id="PS50984">
    <property type="entry name" value="TRUD"/>
    <property type="match status" value="1"/>
</dbReference>
<dbReference type="PROSITE" id="PS01268">
    <property type="entry name" value="UPF0024"/>
    <property type="match status" value="1"/>
</dbReference>